<evidence type="ECO:0000250" key="1">
    <source>
        <dbReference type="UniProtKB" id="P00593"/>
    </source>
</evidence>
<evidence type="ECO:0000250" key="2">
    <source>
        <dbReference type="UniProtKB" id="P04054"/>
    </source>
</evidence>
<evidence type="ECO:0000255" key="3"/>
<evidence type="ECO:0000269" key="4">
    <source>
    </source>
</evidence>
<evidence type="ECO:0000303" key="5">
    <source>
    </source>
</evidence>
<evidence type="ECO:0000305" key="6"/>
<evidence type="ECO:0000305" key="7">
    <source>
    </source>
</evidence>
<keyword id="KW-0106">Calcium</keyword>
<keyword id="KW-1015">Disulfide bond</keyword>
<keyword id="KW-0378">Hydrolase</keyword>
<keyword id="KW-0442">Lipid degradation</keyword>
<keyword id="KW-0551">Lipid droplet</keyword>
<keyword id="KW-0443">Lipid metabolism</keyword>
<keyword id="KW-0479">Metal-binding</keyword>
<keyword id="KW-1185">Reference proteome</keyword>
<keyword id="KW-0964">Secreted</keyword>
<keyword id="KW-0732">Signal</keyword>
<keyword id="KW-0843">Virulence</keyword>
<sequence>MKLAYFSSLLPLALAAPASVVDPREPKEDITDRYLFSTPLPTFLEYREKENPDSLDWTSDGCTHASNNPFGFPFEPACQRHDFGYRNYQAQTRFESDSRYRIDLNFYNDMIFQCTDVSALRSCHGLADVYYAGVRMFGGFAKRDEMGAVVASATDPKESAEDLIAVYYTALQEYHQAVKADQADGLLPRL</sequence>
<proteinExistence type="evidence at protein level"/>
<accession>J4KMY5</accession>
<organism>
    <name type="scientific">Beauveria bassiana (strain ARSEF 2860)</name>
    <name type="common">White muscardine disease fungus</name>
    <name type="synonym">Tritirachium shiotae</name>
    <dbReference type="NCBI Taxonomy" id="655819"/>
    <lineage>
        <taxon>Eukaryota</taxon>
        <taxon>Fungi</taxon>
        <taxon>Dikarya</taxon>
        <taxon>Ascomycota</taxon>
        <taxon>Pezizomycotina</taxon>
        <taxon>Sordariomycetes</taxon>
        <taxon>Hypocreomycetidae</taxon>
        <taxon>Hypocreales</taxon>
        <taxon>Cordycipitaceae</taxon>
        <taxon>Beauveria</taxon>
    </lineage>
</organism>
<name>PLA2_BEAB2</name>
<dbReference type="EC" id="3.1.1.4" evidence="4"/>
<dbReference type="EMBL" id="JH725167">
    <property type="protein sequence ID" value="EJP64764.1"/>
    <property type="molecule type" value="Genomic_DNA"/>
</dbReference>
<dbReference type="RefSeq" id="XP_008599652.1">
    <property type="nucleotide sequence ID" value="XM_008601430.1"/>
</dbReference>
<dbReference type="SMR" id="J4KMY5"/>
<dbReference type="GeneID" id="19889345"/>
<dbReference type="HOGENOM" id="CLU_053014_1_0_1"/>
<dbReference type="InParanoid" id="J4KMY5"/>
<dbReference type="OrthoDB" id="5384at474943"/>
<dbReference type="Proteomes" id="UP000002762">
    <property type="component" value="Unassembled WGS sequence"/>
</dbReference>
<dbReference type="GO" id="GO:0005576">
    <property type="term" value="C:extracellular region"/>
    <property type="evidence" value="ECO:0007669"/>
    <property type="project" value="UniProtKB-SubCell"/>
</dbReference>
<dbReference type="GO" id="GO:0005811">
    <property type="term" value="C:lipid droplet"/>
    <property type="evidence" value="ECO:0007669"/>
    <property type="project" value="UniProtKB-SubCell"/>
</dbReference>
<dbReference type="GO" id="GO:0046872">
    <property type="term" value="F:metal ion binding"/>
    <property type="evidence" value="ECO:0007669"/>
    <property type="project" value="UniProtKB-KW"/>
</dbReference>
<dbReference type="GO" id="GO:0004623">
    <property type="term" value="F:phospholipase A2 activity"/>
    <property type="evidence" value="ECO:0007669"/>
    <property type="project" value="InterPro"/>
</dbReference>
<dbReference type="GO" id="GO:0050482">
    <property type="term" value="P:arachidonate secretion"/>
    <property type="evidence" value="ECO:0007669"/>
    <property type="project" value="InterPro"/>
</dbReference>
<dbReference type="GO" id="GO:0016042">
    <property type="term" value="P:lipid catabolic process"/>
    <property type="evidence" value="ECO:0007669"/>
    <property type="project" value="UniProtKB-KW"/>
</dbReference>
<dbReference type="GO" id="GO:0006644">
    <property type="term" value="P:phospholipid metabolic process"/>
    <property type="evidence" value="ECO:0007669"/>
    <property type="project" value="InterPro"/>
</dbReference>
<dbReference type="Gene3D" id="1.20.90.10">
    <property type="entry name" value="Phospholipase A2 domain"/>
    <property type="match status" value="1"/>
</dbReference>
<dbReference type="InterPro" id="IPR036444">
    <property type="entry name" value="PLipase_A2_dom_sf"/>
</dbReference>
<dbReference type="InterPro" id="IPR015141">
    <property type="entry name" value="PLipase_A2_prok/fun"/>
</dbReference>
<dbReference type="PANTHER" id="PTHR40787:SF3">
    <property type="entry name" value="PROTEIN TRANSPORT PROTEIN SEC39"/>
    <property type="match status" value="1"/>
</dbReference>
<dbReference type="PANTHER" id="PTHR40787">
    <property type="entry name" value="SECRETED PROTEIN"/>
    <property type="match status" value="1"/>
</dbReference>
<dbReference type="Pfam" id="PF09056">
    <property type="entry name" value="Phospholip_A2_3"/>
    <property type="match status" value="1"/>
</dbReference>
<dbReference type="SUPFAM" id="SSF48619">
    <property type="entry name" value="Phospholipase A2, PLA2"/>
    <property type="match status" value="1"/>
</dbReference>
<protein>
    <recommendedName>
        <fullName evidence="5">Secretory phospholipase A2</fullName>
        <ecNumber evidence="4">3.1.1.4</ecNumber>
    </recommendedName>
</protein>
<feature type="signal peptide" evidence="3">
    <location>
        <begin position="1"/>
        <end position="15"/>
    </location>
</feature>
<feature type="chain" id="PRO_5012361776" description="Secretory phospholipase A2">
    <location>
        <begin position="16"/>
        <end position="190"/>
    </location>
</feature>
<feature type="active site" evidence="1">
    <location>
        <position position="81"/>
    </location>
</feature>
<feature type="binding site" evidence="1">
    <location>
        <position position="65"/>
    </location>
    <ligand>
        <name>Ca(2+)</name>
        <dbReference type="ChEBI" id="CHEBI:29108"/>
    </ligand>
</feature>
<feature type="binding site" evidence="1">
    <location>
        <position position="82"/>
    </location>
    <ligand>
        <name>Ca(2+)</name>
        <dbReference type="ChEBI" id="CHEBI:29108"/>
    </ligand>
</feature>
<feature type="disulfide bond" evidence="2">
    <location>
        <begin position="62"/>
        <end position="78"/>
    </location>
</feature>
<gene>
    <name evidence="5" type="primary">PLA2</name>
    <name type="ORF">BBA_06333</name>
</gene>
<reference key="1">
    <citation type="journal article" date="2012" name="Sci. Rep.">
        <title>Genomic perspectives on the evolution of fungal entomopathogenicity in Beauveria bassiana.</title>
        <authorList>
            <person name="Xiao G."/>
            <person name="Ying S.-H."/>
            <person name="Zheng P."/>
            <person name="Wang Z.-L."/>
            <person name="Zhang S."/>
            <person name="Xie X.-Q."/>
            <person name="Shang Y."/>
            <person name="St Leger R.J."/>
            <person name="Zhao G.-P."/>
            <person name="Wang C."/>
            <person name="Feng M.-G."/>
        </authorList>
    </citation>
    <scope>NUCLEOTIDE SEQUENCE [LARGE SCALE GENOMIC DNA]</scope>
    <source>
        <strain>ARSEF 2860</strain>
    </source>
</reference>
<reference key="2">
    <citation type="journal article" date="2022" name="Insect Sci.">
        <title>A secretory phospholipase A2 of a fungal pathogen contributes to lipid droplet homeostasis, assimilation of insect-derived lipids, and repression of host immune responses.</title>
        <authorList>
            <person name="Deng J."/>
            <person name="Lu Z."/>
            <person name="Wang H."/>
            <person name="Li N."/>
            <person name="Song G."/>
            <person name="Zhu Q."/>
            <person name="Sun J."/>
            <person name="Zhang Y."/>
        </authorList>
    </citation>
    <scope>FUNCTION</scope>
    <scope>SUBCELLULAR LOCATION</scope>
    <scope>INDUCTION</scope>
    <scope>CATALYTIC ACTIVITY</scope>
    <scope>BIOPHYSICOCHEMICAL PROPERTIES</scope>
    <scope>DISRUPTION PHENOTYPE</scope>
</reference>
<comment type="function">
    <text evidence="4">Secretory phospholipase that catalyzes the calcium-dependent hydrolysis of the 2-acyl groups in 3-sn-phosphoglycerides (PubMed:35276754). Increases the ability to utilize insect-derived nutrients and lipids, and promotes lipid dropplets accumulation (PubMed:35276754). Plays a role in virulence, including more efficient penetration of the insect cuticle and evasion of host immune response by repressing the expression of host immunity genes (PubMed:35276754).</text>
</comment>
<comment type="catalytic activity">
    <reaction evidence="4">
        <text>a 1,2-diacyl-sn-glycero-3-phosphocholine + H2O = a 1-acyl-sn-glycero-3-phosphocholine + a fatty acid + H(+)</text>
        <dbReference type="Rhea" id="RHEA:15801"/>
        <dbReference type="ChEBI" id="CHEBI:15377"/>
        <dbReference type="ChEBI" id="CHEBI:15378"/>
        <dbReference type="ChEBI" id="CHEBI:28868"/>
        <dbReference type="ChEBI" id="CHEBI:57643"/>
        <dbReference type="ChEBI" id="CHEBI:58168"/>
        <dbReference type="EC" id="3.1.1.4"/>
    </reaction>
    <physiologicalReaction direction="left-to-right" evidence="4">
        <dbReference type="Rhea" id="RHEA:15802"/>
    </physiologicalReaction>
</comment>
<comment type="cofactor">
    <cofactor evidence="7">
        <name>Ca(2+)</name>
        <dbReference type="ChEBI" id="CHEBI:29108"/>
    </cofactor>
    <text evidence="7">Binds 1 Ca(2+) ion per subunit.</text>
</comment>
<comment type="biophysicochemical properties">
    <kinetics>
        <KM evidence="4">0.56 mM for phosphatidyl-choline</KM>
    </kinetics>
    <phDependence>
        <text evidence="4">Optimum pH is 7.0-11.0.</text>
    </phDependence>
    <temperatureDependence>
        <text evidence="4">Optimum temperature is 35 degrees Celsius.</text>
    </temperatureDependence>
</comment>
<comment type="subcellular location">
    <subcellularLocation>
        <location evidence="4">Lipid droplet</location>
    </subcellularLocation>
    <subcellularLocation>
        <location evidence="4">Secreted</location>
    </subcellularLocation>
</comment>
<comment type="induction">
    <text evidence="4">Expression is dramatically induced in the presence of insect hemolymph as well as by lipids (PubMed:35276754). In addition, is also up-regulated in cultures containing insect cuticle and under conditions of nutrient starvation (PubMed:35276754).</text>
</comment>
<comment type="disruption phenotype">
    <text evidence="4">Decreases the ability to penetrate the host cuticle and impairs the repression of host immunity genes.</text>
</comment>
<comment type="similarity">
    <text evidence="6">Belongs to the phospholipase A2 family.</text>
</comment>